<feature type="chain" id="PRO_1000063569" description="3-isopropylmalate dehydratase large subunit">
    <location>
        <begin position="1"/>
        <end position="472"/>
    </location>
</feature>
<feature type="binding site" evidence="1">
    <location>
        <position position="351"/>
    </location>
    <ligand>
        <name>[4Fe-4S] cluster</name>
        <dbReference type="ChEBI" id="CHEBI:49883"/>
    </ligand>
</feature>
<feature type="binding site" evidence="1">
    <location>
        <position position="412"/>
    </location>
    <ligand>
        <name>[4Fe-4S] cluster</name>
        <dbReference type="ChEBI" id="CHEBI:49883"/>
    </ligand>
</feature>
<feature type="binding site" evidence="1">
    <location>
        <position position="415"/>
    </location>
    <ligand>
        <name>[4Fe-4S] cluster</name>
        <dbReference type="ChEBI" id="CHEBI:49883"/>
    </ligand>
</feature>
<accession>A1U0Y0</accession>
<sequence length="472" mass="50832">MAGKTLYDKLWDDHLVKQRDDGSALIYIDRQLLHEVTSPQAFEGLRLAGRKPWRIDANIATPDHNVPTTDRDKGIDGIVDPVSRTQVETLDKNCDEFGILEFKIKDQRQGIVHVIGPEQGATLPGMSIVCGDSHTSTHGAFGCLAHGIGTSEVEHVLATQCLVQKKMKNMLVKVNGKLGAGVTGKDVVLAIIGKIGTAGGTGYAIEFGGEAIRGLSMEGRMTICNMSIEAGARVGMVAVDDTTIEYVKGRPFSPKGETWDKAVEYWRTLHSDDDAVFDKVVELDGSAIQPQVSWGTSPEMVVGVEGAVPDPAKEEDPIKREGIVRALKYMGLQPNQKITDIKLDRVFIGSCTNSRIEDLREAAAVVKGRKVAASLKQAMVVPGSGLVKAQAEQEGLDKVFIEAGLEWRDPGCSMCLAMNADKLGQGEHCASTSNRNFEGRQGFGGRTHLVSPAMAAAAAVTGHFVDVRELMN</sequence>
<name>LEUC_MARN8</name>
<proteinExistence type="inferred from homology"/>
<gene>
    <name evidence="1" type="primary">leuC</name>
    <name type="ordered locus">Maqu_1565</name>
</gene>
<comment type="function">
    <text evidence="1">Catalyzes the isomerization between 2-isopropylmalate and 3-isopropylmalate, via the formation of 2-isopropylmaleate.</text>
</comment>
<comment type="catalytic activity">
    <reaction evidence="1">
        <text>(2R,3S)-3-isopropylmalate = (2S)-2-isopropylmalate</text>
        <dbReference type="Rhea" id="RHEA:32287"/>
        <dbReference type="ChEBI" id="CHEBI:1178"/>
        <dbReference type="ChEBI" id="CHEBI:35121"/>
        <dbReference type="EC" id="4.2.1.33"/>
    </reaction>
</comment>
<comment type="cofactor">
    <cofactor evidence="1">
        <name>[4Fe-4S] cluster</name>
        <dbReference type="ChEBI" id="CHEBI:49883"/>
    </cofactor>
    <text evidence="1">Binds 1 [4Fe-4S] cluster per subunit.</text>
</comment>
<comment type="pathway">
    <text evidence="1">Amino-acid biosynthesis; L-leucine biosynthesis; L-leucine from 3-methyl-2-oxobutanoate: step 2/4.</text>
</comment>
<comment type="subunit">
    <text evidence="1">Heterodimer of LeuC and LeuD.</text>
</comment>
<comment type="similarity">
    <text evidence="1">Belongs to the aconitase/IPM isomerase family. LeuC type 1 subfamily.</text>
</comment>
<keyword id="KW-0004">4Fe-4S</keyword>
<keyword id="KW-0028">Amino-acid biosynthesis</keyword>
<keyword id="KW-0100">Branched-chain amino acid biosynthesis</keyword>
<keyword id="KW-0408">Iron</keyword>
<keyword id="KW-0411">Iron-sulfur</keyword>
<keyword id="KW-0432">Leucine biosynthesis</keyword>
<keyword id="KW-0456">Lyase</keyword>
<keyword id="KW-0479">Metal-binding</keyword>
<reference key="1">
    <citation type="journal article" date="2011" name="Appl. Environ. Microbiol.">
        <title>Genomic potential of Marinobacter aquaeolei, a biogeochemical 'opportunitroph'.</title>
        <authorList>
            <person name="Singer E."/>
            <person name="Webb E.A."/>
            <person name="Nelson W.C."/>
            <person name="Heidelberg J.F."/>
            <person name="Ivanova N."/>
            <person name="Pati A."/>
            <person name="Edwards K.J."/>
        </authorList>
    </citation>
    <scope>NUCLEOTIDE SEQUENCE [LARGE SCALE GENOMIC DNA]</scope>
    <source>
        <strain>ATCC 700491 / DSM 11845 / VT8</strain>
    </source>
</reference>
<evidence type="ECO:0000255" key="1">
    <source>
        <dbReference type="HAMAP-Rule" id="MF_01026"/>
    </source>
</evidence>
<protein>
    <recommendedName>
        <fullName evidence="1">3-isopropylmalate dehydratase large subunit</fullName>
        <ecNumber evidence="1">4.2.1.33</ecNumber>
    </recommendedName>
    <alternativeName>
        <fullName evidence="1">Alpha-IPM isomerase</fullName>
        <shortName evidence="1">IPMI</shortName>
    </alternativeName>
    <alternativeName>
        <fullName evidence="1">Isopropylmalate isomerase</fullName>
    </alternativeName>
</protein>
<dbReference type="EC" id="4.2.1.33" evidence="1"/>
<dbReference type="EMBL" id="CP000514">
    <property type="protein sequence ID" value="ABM18649.1"/>
    <property type="molecule type" value="Genomic_DNA"/>
</dbReference>
<dbReference type="RefSeq" id="WP_011785051.1">
    <property type="nucleotide sequence ID" value="NC_008740.1"/>
</dbReference>
<dbReference type="SMR" id="A1U0Y0"/>
<dbReference type="STRING" id="351348.Maqu_1565"/>
<dbReference type="KEGG" id="maq:Maqu_1565"/>
<dbReference type="eggNOG" id="COG0065">
    <property type="taxonomic scope" value="Bacteria"/>
</dbReference>
<dbReference type="HOGENOM" id="CLU_006714_3_4_6"/>
<dbReference type="OrthoDB" id="9802769at2"/>
<dbReference type="UniPathway" id="UPA00048">
    <property type="reaction ID" value="UER00071"/>
</dbReference>
<dbReference type="Proteomes" id="UP000000998">
    <property type="component" value="Chromosome"/>
</dbReference>
<dbReference type="GO" id="GO:0003861">
    <property type="term" value="F:3-isopropylmalate dehydratase activity"/>
    <property type="evidence" value="ECO:0007669"/>
    <property type="project" value="UniProtKB-UniRule"/>
</dbReference>
<dbReference type="GO" id="GO:0051539">
    <property type="term" value="F:4 iron, 4 sulfur cluster binding"/>
    <property type="evidence" value="ECO:0007669"/>
    <property type="project" value="UniProtKB-KW"/>
</dbReference>
<dbReference type="GO" id="GO:0046872">
    <property type="term" value="F:metal ion binding"/>
    <property type="evidence" value="ECO:0007669"/>
    <property type="project" value="UniProtKB-KW"/>
</dbReference>
<dbReference type="GO" id="GO:0009098">
    <property type="term" value="P:L-leucine biosynthetic process"/>
    <property type="evidence" value="ECO:0007669"/>
    <property type="project" value="UniProtKB-UniRule"/>
</dbReference>
<dbReference type="CDD" id="cd01583">
    <property type="entry name" value="IPMI"/>
    <property type="match status" value="1"/>
</dbReference>
<dbReference type="FunFam" id="3.30.499.10:FF:000007">
    <property type="entry name" value="3-isopropylmalate dehydratase large subunit"/>
    <property type="match status" value="1"/>
</dbReference>
<dbReference type="Gene3D" id="3.30.499.10">
    <property type="entry name" value="Aconitase, domain 3"/>
    <property type="match status" value="2"/>
</dbReference>
<dbReference type="HAMAP" id="MF_01026">
    <property type="entry name" value="LeuC_type1"/>
    <property type="match status" value="1"/>
</dbReference>
<dbReference type="InterPro" id="IPR004430">
    <property type="entry name" value="3-IsopropMal_deHydase_lsu"/>
</dbReference>
<dbReference type="InterPro" id="IPR015931">
    <property type="entry name" value="Acnase/IPM_dHydase_lsu_aba_1/3"/>
</dbReference>
<dbReference type="InterPro" id="IPR001030">
    <property type="entry name" value="Acoase/IPM_deHydtase_lsu_aba"/>
</dbReference>
<dbReference type="InterPro" id="IPR018136">
    <property type="entry name" value="Aconitase_4Fe-4S_BS"/>
</dbReference>
<dbReference type="InterPro" id="IPR036008">
    <property type="entry name" value="Aconitase_4Fe-4S_dom"/>
</dbReference>
<dbReference type="InterPro" id="IPR050067">
    <property type="entry name" value="IPM_dehydratase_rel_enz"/>
</dbReference>
<dbReference type="InterPro" id="IPR033941">
    <property type="entry name" value="IPMI_cat"/>
</dbReference>
<dbReference type="NCBIfam" id="TIGR00170">
    <property type="entry name" value="leuC"/>
    <property type="match status" value="1"/>
</dbReference>
<dbReference type="NCBIfam" id="NF004016">
    <property type="entry name" value="PRK05478.1"/>
    <property type="match status" value="1"/>
</dbReference>
<dbReference type="NCBIfam" id="NF009116">
    <property type="entry name" value="PRK12466.1"/>
    <property type="match status" value="1"/>
</dbReference>
<dbReference type="PANTHER" id="PTHR43822:SF9">
    <property type="entry name" value="3-ISOPROPYLMALATE DEHYDRATASE"/>
    <property type="match status" value="1"/>
</dbReference>
<dbReference type="PANTHER" id="PTHR43822">
    <property type="entry name" value="HOMOACONITASE, MITOCHONDRIAL-RELATED"/>
    <property type="match status" value="1"/>
</dbReference>
<dbReference type="Pfam" id="PF00330">
    <property type="entry name" value="Aconitase"/>
    <property type="match status" value="1"/>
</dbReference>
<dbReference type="PRINTS" id="PR00415">
    <property type="entry name" value="ACONITASE"/>
</dbReference>
<dbReference type="SUPFAM" id="SSF53732">
    <property type="entry name" value="Aconitase iron-sulfur domain"/>
    <property type="match status" value="1"/>
</dbReference>
<dbReference type="PROSITE" id="PS00450">
    <property type="entry name" value="ACONITASE_1"/>
    <property type="match status" value="1"/>
</dbReference>
<dbReference type="PROSITE" id="PS01244">
    <property type="entry name" value="ACONITASE_2"/>
    <property type="match status" value="1"/>
</dbReference>
<organism>
    <name type="scientific">Marinobacter nauticus (strain ATCC 700491 / DSM 11845 / VT8)</name>
    <name type="common">Marinobacter aquaeolei</name>
    <dbReference type="NCBI Taxonomy" id="351348"/>
    <lineage>
        <taxon>Bacteria</taxon>
        <taxon>Pseudomonadati</taxon>
        <taxon>Pseudomonadota</taxon>
        <taxon>Gammaproteobacteria</taxon>
        <taxon>Pseudomonadales</taxon>
        <taxon>Marinobacteraceae</taxon>
        <taxon>Marinobacter</taxon>
    </lineage>
</organism>